<name>APT_SALA4</name>
<accession>B5EXM5</accession>
<feature type="chain" id="PRO_1000088998" description="Adenine phosphoribosyltransferase">
    <location>
        <begin position="1"/>
        <end position="183"/>
    </location>
</feature>
<gene>
    <name evidence="1" type="primary">apt</name>
    <name type="ordered locus">SeAg_B0527</name>
</gene>
<sequence length="183" mass="19985">MTATAQQLEFLKNSIKSIQDYPKPGILFRDVTSLLEDPKAYALSIELLVERYKNAGITKVVGTEARGFLFGAPVALGLGVGFVPVRKPRKLPRETIAETYELEYGTDQLEIHVDAIKPGDNVLVVDDLLATGGTIEATVKLIRRLGGKVTDAAFIINLFDLGGEQRLEKQGITCYSLVPFPGH</sequence>
<keyword id="KW-0963">Cytoplasm</keyword>
<keyword id="KW-0328">Glycosyltransferase</keyword>
<keyword id="KW-0660">Purine salvage</keyword>
<keyword id="KW-0808">Transferase</keyword>
<dbReference type="EC" id="2.4.2.7" evidence="1"/>
<dbReference type="EMBL" id="CP001138">
    <property type="protein sequence ID" value="ACH50995.1"/>
    <property type="molecule type" value="Genomic_DNA"/>
</dbReference>
<dbReference type="RefSeq" id="WP_000127350.1">
    <property type="nucleotide sequence ID" value="NC_011149.1"/>
</dbReference>
<dbReference type="SMR" id="B5EXM5"/>
<dbReference type="KEGG" id="sea:SeAg_B0527"/>
<dbReference type="HOGENOM" id="CLU_063339_3_0_6"/>
<dbReference type="UniPathway" id="UPA00588">
    <property type="reaction ID" value="UER00646"/>
</dbReference>
<dbReference type="Proteomes" id="UP000008819">
    <property type="component" value="Chromosome"/>
</dbReference>
<dbReference type="GO" id="GO:0005829">
    <property type="term" value="C:cytosol"/>
    <property type="evidence" value="ECO:0007669"/>
    <property type="project" value="TreeGrafter"/>
</dbReference>
<dbReference type="GO" id="GO:0003999">
    <property type="term" value="F:adenine phosphoribosyltransferase activity"/>
    <property type="evidence" value="ECO:0007669"/>
    <property type="project" value="UniProtKB-UniRule"/>
</dbReference>
<dbReference type="GO" id="GO:0006168">
    <property type="term" value="P:adenine salvage"/>
    <property type="evidence" value="ECO:0007669"/>
    <property type="project" value="InterPro"/>
</dbReference>
<dbReference type="GO" id="GO:0044209">
    <property type="term" value="P:AMP salvage"/>
    <property type="evidence" value="ECO:0007669"/>
    <property type="project" value="UniProtKB-UniRule"/>
</dbReference>
<dbReference type="GO" id="GO:0006166">
    <property type="term" value="P:purine ribonucleoside salvage"/>
    <property type="evidence" value="ECO:0007669"/>
    <property type="project" value="UniProtKB-KW"/>
</dbReference>
<dbReference type="CDD" id="cd06223">
    <property type="entry name" value="PRTases_typeI"/>
    <property type="match status" value="1"/>
</dbReference>
<dbReference type="FunFam" id="3.40.50.2020:FF:000004">
    <property type="entry name" value="Adenine phosphoribosyltransferase"/>
    <property type="match status" value="1"/>
</dbReference>
<dbReference type="Gene3D" id="3.40.50.2020">
    <property type="match status" value="1"/>
</dbReference>
<dbReference type="HAMAP" id="MF_00004">
    <property type="entry name" value="Aden_phosphoribosyltr"/>
    <property type="match status" value="1"/>
</dbReference>
<dbReference type="InterPro" id="IPR005764">
    <property type="entry name" value="Ade_phspho_trans"/>
</dbReference>
<dbReference type="InterPro" id="IPR050120">
    <property type="entry name" value="Adenine_PRTase"/>
</dbReference>
<dbReference type="InterPro" id="IPR000836">
    <property type="entry name" value="PRibTrfase_dom"/>
</dbReference>
<dbReference type="InterPro" id="IPR029057">
    <property type="entry name" value="PRTase-like"/>
</dbReference>
<dbReference type="NCBIfam" id="TIGR01090">
    <property type="entry name" value="apt"/>
    <property type="match status" value="1"/>
</dbReference>
<dbReference type="NCBIfam" id="NF002632">
    <property type="entry name" value="PRK02304.1-1"/>
    <property type="match status" value="1"/>
</dbReference>
<dbReference type="NCBIfam" id="NF002634">
    <property type="entry name" value="PRK02304.1-3"/>
    <property type="match status" value="1"/>
</dbReference>
<dbReference type="NCBIfam" id="NF002636">
    <property type="entry name" value="PRK02304.1-5"/>
    <property type="match status" value="1"/>
</dbReference>
<dbReference type="PANTHER" id="PTHR11776">
    <property type="entry name" value="ADENINE PHOSPHORIBOSYLTRANSFERASE"/>
    <property type="match status" value="1"/>
</dbReference>
<dbReference type="PANTHER" id="PTHR11776:SF7">
    <property type="entry name" value="PHOSPHORIBOSYLTRANSFERASE DOMAIN-CONTAINING PROTEIN"/>
    <property type="match status" value="1"/>
</dbReference>
<dbReference type="Pfam" id="PF00156">
    <property type="entry name" value="Pribosyltran"/>
    <property type="match status" value="1"/>
</dbReference>
<dbReference type="SUPFAM" id="SSF53271">
    <property type="entry name" value="PRTase-like"/>
    <property type="match status" value="1"/>
</dbReference>
<dbReference type="PROSITE" id="PS00103">
    <property type="entry name" value="PUR_PYR_PR_TRANSFER"/>
    <property type="match status" value="1"/>
</dbReference>
<proteinExistence type="inferred from homology"/>
<protein>
    <recommendedName>
        <fullName evidence="1">Adenine phosphoribosyltransferase</fullName>
        <shortName evidence="1">APRT</shortName>
        <ecNumber evidence="1">2.4.2.7</ecNumber>
    </recommendedName>
</protein>
<comment type="function">
    <text evidence="1">Catalyzes a salvage reaction resulting in the formation of AMP, that is energically less costly than de novo synthesis.</text>
</comment>
<comment type="catalytic activity">
    <reaction evidence="1">
        <text>AMP + diphosphate = 5-phospho-alpha-D-ribose 1-diphosphate + adenine</text>
        <dbReference type="Rhea" id="RHEA:16609"/>
        <dbReference type="ChEBI" id="CHEBI:16708"/>
        <dbReference type="ChEBI" id="CHEBI:33019"/>
        <dbReference type="ChEBI" id="CHEBI:58017"/>
        <dbReference type="ChEBI" id="CHEBI:456215"/>
        <dbReference type="EC" id="2.4.2.7"/>
    </reaction>
</comment>
<comment type="pathway">
    <text evidence="1">Purine metabolism; AMP biosynthesis via salvage pathway; AMP from adenine: step 1/1.</text>
</comment>
<comment type="subunit">
    <text evidence="1">Homodimer.</text>
</comment>
<comment type="subcellular location">
    <subcellularLocation>
        <location evidence="1">Cytoplasm</location>
    </subcellularLocation>
</comment>
<comment type="similarity">
    <text evidence="1">Belongs to the purine/pyrimidine phosphoribosyltransferase family.</text>
</comment>
<organism>
    <name type="scientific">Salmonella agona (strain SL483)</name>
    <dbReference type="NCBI Taxonomy" id="454166"/>
    <lineage>
        <taxon>Bacteria</taxon>
        <taxon>Pseudomonadati</taxon>
        <taxon>Pseudomonadota</taxon>
        <taxon>Gammaproteobacteria</taxon>
        <taxon>Enterobacterales</taxon>
        <taxon>Enterobacteriaceae</taxon>
        <taxon>Salmonella</taxon>
    </lineage>
</organism>
<evidence type="ECO:0000255" key="1">
    <source>
        <dbReference type="HAMAP-Rule" id="MF_00004"/>
    </source>
</evidence>
<reference key="1">
    <citation type="journal article" date="2011" name="J. Bacteriol.">
        <title>Comparative genomics of 28 Salmonella enterica isolates: evidence for CRISPR-mediated adaptive sublineage evolution.</title>
        <authorList>
            <person name="Fricke W.F."/>
            <person name="Mammel M.K."/>
            <person name="McDermott P.F."/>
            <person name="Tartera C."/>
            <person name="White D.G."/>
            <person name="Leclerc J.E."/>
            <person name="Ravel J."/>
            <person name="Cebula T.A."/>
        </authorList>
    </citation>
    <scope>NUCLEOTIDE SEQUENCE [LARGE SCALE GENOMIC DNA]</scope>
    <source>
        <strain>SL483</strain>
    </source>
</reference>